<dbReference type="EMBL" id="AY864054">
    <property type="protein sequence ID" value="AAW57434.1"/>
    <property type="molecule type" value="mRNA"/>
</dbReference>
<dbReference type="RefSeq" id="NP_001029254.1">
    <property type="nucleotide sequence ID" value="NM_001034082.1"/>
</dbReference>
<dbReference type="SMR" id="Q5I1Z0"/>
<dbReference type="FunCoup" id="Q5I1Z0">
    <property type="interactions" value="666"/>
</dbReference>
<dbReference type="STRING" id="9598.ENSPTRP00000057009"/>
<dbReference type="PaxDb" id="9598-ENSPTRP00000053003"/>
<dbReference type="Ensembl" id="ENSPTRT00000065443.3">
    <property type="protein sequence ID" value="ENSPTRP00000057009.3"/>
    <property type="gene ID" value="ENSPTRG00000009039.6"/>
</dbReference>
<dbReference type="GeneID" id="454592"/>
<dbReference type="KEGG" id="ptr:454592"/>
<dbReference type="CTD" id="6348"/>
<dbReference type="eggNOG" id="ENOG502SAF0">
    <property type="taxonomic scope" value="Eukaryota"/>
</dbReference>
<dbReference type="GeneTree" id="ENSGT01100000263482"/>
<dbReference type="HOGENOM" id="CLU_141716_4_0_1"/>
<dbReference type="InParanoid" id="Q5I1Z0"/>
<dbReference type="OMA" id="ACCFTYV"/>
<dbReference type="OrthoDB" id="3784at9604"/>
<dbReference type="TreeFam" id="TF334888"/>
<dbReference type="Proteomes" id="UP000002277">
    <property type="component" value="Chromosome 17"/>
</dbReference>
<dbReference type="Bgee" id="ENSPTRG00000009039">
    <property type="expression patterns" value="Expressed in liver and 13 other cell types or tissues"/>
</dbReference>
<dbReference type="GO" id="GO:0005737">
    <property type="term" value="C:cytoplasm"/>
    <property type="evidence" value="ECO:0000250"/>
    <property type="project" value="UniProtKB"/>
</dbReference>
<dbReference type="GO" id="GO:0005829">
    <property type="term" value="C:cytosol"/>
    <property type="evidence" value="ECO:0000250"/>
    <property type="project" value="UniProtKB"/>
</dbReference>
<dbReference type="GO" id="GO:0005615">
    <property type="term" value="C:extracellular space"/>
    <property type="evidence" value="ECO:0000250"/>
    <property type="project" value="UniProtKB"/>
</dbReference>
<dbReference type="GO" id="GO:0048020">
    <property type="term" value="F:CCR chemokine receptor binding"/>
    <property type="evidence" value="ECO:0000318"/>
    <property type="project" value="GO_Central"/>
</dbReference>
<dbReference type="GO" id="GO:0031726">
    <property type="term" value="F:CCR1 chemokine receptor binding"/>
    <property type="evidence" value="ECO:0007669"/>
    <property type="project" value="Ensembl"/>
</dbReference>
<dbReference type="GO" id="GO:0031730">
    <property type="term" value="F:CCR5 chemokine receptor binding"/>
    <property type="evidence" value="ECO:0007669"/>
    <property type="project" value="Ensembl"/>
</dbReference>
<dbReference type="GO" id="GO:0042056">
    <property type="term" value="F:chemoattractant activity"/>
    <property type="evidence" value="ECO:0000250"/>
    <property type="project" value="UniProtKB"/>
</dbReference>
<dbReference type="GO" id="GO:0008009">
    <property type="term" value="F:chemokine activity"/>
    <property type="evidence" value="ECO:0000250"/>
    <property type="project" value="UniProtKB"/>
</dbReference>
<dbReference type="GO" id="GO:0042802">
    <property type="term" value="F:identical protein binding"/>
    <property type="evidence" value="ECO:0007669"/>
    <property type="project" value="Ensembl"/>
</dbReference>
<dbReference type="GO" id="GO:0016301">
    <property type="term" value="F:kinase activity"/>
    <property type="evidence" value="ECO:0000250"/>
    <property type="project" value="UniProtKB"/>
</dbReference>
<dbReference type="GO" id="GO:0016004">
    <property type="term" value="F:phospholipase activator activity"/>
    <property type="evidence" value="ECO:0000250"/>
    <property type="project" value="UniProtKB"/>
</dbReference>
<dbReference type="GO" id="GO:0004672">
    <property type="term" value="F:protein kinase activity"/>
    <property type="evidence" value="ECO:0000250"/>
    <property type="project" value="UniProtKB"/>
</dbReference>
<dbReference type="GO" id="GO:0061844">
    <property type="term" value="P:antimicrobial humoral immune response mediated by antimicrobial peptide"/>
    <property type="evidence" value="ECO:0000318"/>
    <property type="project" value="GO_Central"/>
</dbReference>
<dbReference type="GO" id="GO:0043615">
    <property type="term" value="P:astrocyte cell migration"/>
    <property type="evidence" value="ECO:0000250"/>
    <property type="project" value="UniProtKB"/>
</dbReference>
<dbReference type="GO" id="GO:0006816">
    <property type="term" value="P:calcium ion transport"/>
    <property type="evidence" value="ECO:0000250"/>
    <property type="project" value="UniProtKB"/>
</dbReference>
<dbReference type="GO" id="GO:0019722">
    <property type="term" value="P:calcium-mediated signaling"/>
    <property type="evidence" value="ECO:0000250"/>
    <property type="project" value="UniProtKB"/>
</dbReference>
<dbReference type="GO" id="GO:0001775">
    <property type="term" value="P:cell activation"/>
    <property type="evidence" value="ECO:0000250"/>
    <property type="project" value="UniProtKB"/>
</dbReference>
<dbReference type="GO" id="GO:0060326">
    <property type="term" value="P:cell chemotaxis"/>
    <property type="evidence" value="ECO:0000318"/>
    <property type="project" value="GO_Central"/>
</dbReference>
<dbReference type="GO" id="GO:0007267">
    <property type="term" value="P:cell-cell signaling"/>
    <property type="evidence" value="ECO:0000250"/>
    <property type="project" value="UniProtKB"/>
</dbReference>
<dbReference type="GO" id="GO:0071347">
    <property type="term" value="P:cellular response to interleukin-1"/>
    <property type="evidence" value="ECO:0007669"/>
    <property type="project" value="Ensembl"/>
</dbReference>
<dbReference type="GO" id="GO:0071356">
    <property type="term" value="P:cellular response to tumor necrosis factor"/>
    <property type="evidence" value="ECO:0007669"/>
    <property type="project" value="Ensembl"/>
</dbReference>
<dbReference type="GO" id="GO:0071346">
    <property type="term" value="P:cellular response to type II interferon"/>
    <property type="evidence" value="ECO:0007669"/>
    <property type="project" value="Ensembl"/>
</dbReference>
<dbReference type="GO" id="GO:0070098">
    <property type="term" value="P:chemokine-mediated signaling pathway"/>
    <property type="evidence" value="ECO:0000318"/>
    <property type="project" value="GO_Central"/>
</dbReference>
<dbReference type="GO" id="GO:0006935">
    <property type="term" value="P:chemotaxis"/>
    <property type="evidence" value="ECO:0000250"/>
    <property type="project" value="UniProtKB"/>
</dbReference>
<dbReference type="GO" id="GO:0007010">
    <property type="term" value="P:cytoskeleton organization"/>
    <property type="evidence" value="ECO:0000250"/>
    <property type="project" value="UniProtKB"/>
</dbReference>
<dbReference type="GO" id="GO:0048245">
    <property type="term" value="P:eosinophil chemotaxis"/>
    <property type="evidence" value="ECO:0000250"/>
    <property type="project" value="UniProtKB"/>
</dbReference>
<dbReference type="GO" id="GO:0043308">
    <property type="term" value="P:eosinophil degranulation"/>
    <property type="evidence" value="ECO:0000250"/>
    <property type="project" value="UniProtKB"/>
</dbReference>
<dbReference type="GO" id="GO:0006887">
    <property type="term" value="P:exocytosis"/>
    <property type="evidence" value="ECO:0000250"/>
    <property type="project" value="UniProtKB"/>
</dbReference>
<dbReference type="GO" id="GO:0071621">
    <property type="term" value="P:granulocyte chemotaxis"/>
    <property type="evidence" value="ECO:0000250"/>
    <property type="project" value="UniProtKB"/>
</dbReference>
<dbReference type="GO" id="GO:0006954">
    <property type="term" value="P:inflammatory response"/>
    <property type="evidence" value="ECO:0000250"/>
    <property type="project" value="UniProtKB"/>
</dbReference>
<dbReference type="GO" id="GO:0006874">
    <property type="term" value="P:intracellular calcium ion homeostasis"/>
    <property type="evidence" value="ECO:0000250"/>
    <property type="project" value="UniProtKB"/>
</dbReference>
<dbReference type="GO" id="GO:0048247">
    <property type="term" value="P:lymphocyte chemotaxis"/>
    <property type="evidence" value="ECO:0000250"/>
    <property type="project" value="UniProtKB"/>
</dbReference>
<dbReference type="GO" id="GO:0048246">
    <property type="term" value="P:macrophage chemotaxis"/>
    <property type="evidence" value="ECO:0000250"/>
    <property type="project" value="UniProtKB"/>
</dbReference>
<dbReference type="GO" id="GO:0000165">
    <property type="term" value="P:MAPK cascade"/>
    <property type="evidence" value="ECO:0007669"/>
    <property type="project" value="Ensembl"/>
</dbReference>
<dbReference type="GO" id="GO:0002548">
    <property type="term" value="P:monocyte chemotaxis"/>
    <property type="evidence" value="ECO:0000250"/>
    <property type="project" value="UniProtKB"/>
</dbReference>
<dbReference type="GO" id="GO:0043922">
    <property type="term" value="P:negative regulation by host of viral transcription"/>
    <property type="evidence" value="ECO:0000250"/>
    <property type="project" value="UniProtKB"/>
</dbReference>
<dbReference type="GO" id="GO:0030502">
    <property type="term" value="P:negative regulation of bone mineralization"/>
    <property type="evidence" value="ECO:0007669"/>
    <property type="project" value="Ensembl"/>
</dbReference>
<dbReference type="GO" id="GO:0010629">
    <property type="term" value="P:negative regulation of gene expression"/>
    <property type="evidence" value="ECO:0000250"/>
    <property type="project" value="UniProtKB"/>
</dbReference>
<dbReference type="GO" id="GO:0045671">
    <property type="term" value="P:negative regulation of osteoclast differentiation"/>
    <property type="evidence" value="ECO:0000250"/>
    <property type="project" value="UniProtKB"/>
</dbReference>
<dbReference type="GO" id="GO:0030593">
    <property type="term" value="P:neutrophil chemotaxis"/>
    <property type="evidence" value="ECO:0000250"/>
    <property type="project" value="UniProtKB"/>
</dbReference>
<dbReference type="GO" id="GO:0001649">
    <property type="term" value="P:osteoblast differentiation"/>
    <property type="evidence" value="ECO:0000250"/>
    <property type="project" value="UniProtKB"/>
</dbReference>
<dbReference type="GO" id="GO:0051928">
    <property type="term" value="P:positive regulation of calcium ion transport"/>
    <property type="evidence" value="ECO:0000250"/>
    <property type="project" value="UniProtKB"/>
</dbReference>
<dbReference type="GO" id="GO:0050850">
    <property type="term" value="P:positive regulation of calcium-mediated signaling"/>
    <property type="evidence" value="ECO:0000250"/>
    <property type="project" value="UniProtKB"/>
</dbReference>
<dbReference type="GO" id="GO:0030335">
    <property type="term" value="P:positive regulation of cell migration"/>
    <property type="evidence" value="ECO:0000250"/>
    <property type="project" value="UniProtKB"/>
</dbReference>
<dbReference type="GO" id="GO:0070374">
    <property type="term" value="P:positive regulation of ERK1 and ERK2 cascade"/>
    <property type="evidence" value="ECO:0000250"/>
    <property type="project" value="UniProtKB"/>
</dbReference>
<dbReference type="GO" id="GO:0010628">
    <property type="term" value="P:positive regulation of gene expression"/>
    <property type="evidence" value="ECO:0000250"/>
    <property type="project" value="UniProtKB"/>
</dbReference>
<dbReference type="GO" id="GO:0050729">
    <property type="term" value="P:positive regulation of inflammatory response"/>
    <property type="evidence" value="ECO:0000250"/>
    <property type="project" value="UniProtKB"/>
</dbReference>
<dbReference type="GO" id="GO:0032731">
    <property type="term" value="P:positive regulation of interleukin-1 beta production"/>
    <property type="evidence" value="ECO:0000250"/>
    <property type="project" value="UniProtKB"/>
</dbReference>
<dbReference type="GO" id="GO:2000503">
    <property type="term" value="P:positive regulation of natural killer cell chemotaxis"/>
    <property type="evidence" value="ECO:0000250"/>
    <property type="project" value="UniProtKB"/>
</dbReference>
<dbReference type="GO" id="GO:0043525">
    <property type="term" value="P:positive regulation of neuron apoptotic process"/>
    <property type="evidence" value="ECO:0000250"/>
    <property type="project" value="UniProtKB"/>
</dbReference>
<dbReference type="GO" id="GO:0051897">
    <property type="term" value="P:positive regulation of phosphatidylinositol 3-kinase/protein kinase B signal transduction"/>
    <property type="evidence" value="ECO:0007669"/>
    <property type="project" value="Ensembl"/>
</dbReference>
<dbReference type="GO" id="GO:0032760">
    <property type="term" value="P:positive regulation of tumor necrosis factor production"/>
    <property type="evidence" value="ECO:0000250"/>
    <property type="project" value="UniProtKB"/>
</dbReference>
<dbReference type="GO" id="GO:0050795">
    <property type="term" value="P:regulation of behavior"/>
    <property type="evidence" value="ECO:0000250"/>
    <property type="project" value="UniProtKB"/>
</dbReference>
<dbReference type="GO" id="GO:0008360">
    <property type="term" value="P:regulation of cell shape"/>
    <property type="evidence" value="ECO:0000250"/>
    <property type="project" value="UniProtKB"/>
</dbReference>
<dbReference type="GO" id="GO:0051930">
    <property type="term" value="P:regulation of sensory perception of pain"/>
    <property type="evidence" value="ECO:0000250"/>
    <property type="project" value="UniProtKB"/>
</dbReference>
<dbReference type="GO" id="GO:0014808">
    <property type="term" value="P:release of sequestered calcium ion into cytosol by sarcoplasmic reticulum"/>
    <property type="evidence" value="ECO:0000250"/>
    <property type="project" value="UniProtKB"/>
</dbReference>
<dbReference type="GO" id="GO:0070723">
    <property type="term" value="P:response to cholesterol"/>
    <property type="evidence" value="ECO:0000250"/>
    <property type="project" value="UniProtKB"/>
</dbReference>
<dbReference type="GO" id="GO:0009636">
    <property type="term" value="P:response to toxic substance"/>
    <property type="evidence" value="ECO:0000250"/>
    <property type="project" value="UniProtKB"/>
</dbReference>
<dbReference type="GO" id="GO:0023052">
    <property type="term" value="P:signaling"/>
    <property type="evidence" value="ECO:0000250"/>
    <property type="project" value="UniProtKB"/>
</dbReference>
<dbReference type="GO" id="GO:0010818">
    <property type="term" value="P:T cell chemotaxis"/>
    <property type="evidence" value="ECO:0000250"/>
    <property type="project" value="UniProtKB"/>
</dbReference>
<dbReference type="CDD" id="cd00272">
    <property type="entry name" value="Chemokine_CC"/>
    <property type="match status" value="1"/>
</dbReference>
<dbReference type="FunFam" id="2.40.50.40:FF:000002">
    <property type="entry name" value="C-C motif chemokine"/>
    <property type="match status" value="1"/>
</dbReference>
<dbReference type="Gene3D" id="2.40.50.40">
    <property type="match status" value="1"/>
</dbReference>
<dbReference type="InterPro" id="IPR039809">
    <property type="entry name" value="Chemokine_b/g/d"/>
</dbReference>
<dbReference type="InterPro" id="IPR000827">
    <property type="entry name" value="Chemokine_CC_CS"/>
</dbReference>
<dbReference type="InterPro" id="IPR001811">
    <property type="entry name" value="Chemokine_IL8-like_dom"/>
</dbReference>
<dbReference type="InterPro" id="IPR036048">
    <property type="entry name" value="Interleukin_8-like_sf"/>
</dbReference>
<dbReference type="PANTHER" id="PTHR12015:SF151">
    <property type="entry name" value="C-C MOTIF CHEMOKINE 3-LIKE 1"/>
    <property type="match status" value="1"/>
</dbReference>
<dbReference type="PANTHER" id="PTHR12015">
    <property type="entry name" value="SMALL INDUCIBLE CYTOKINE A"/>
    <property type="match status" value="1"/>
</dbReference>
<dbReference type="Pfam" id="PF00048">
    <property type="entry name" value="IL8"/>
    <property type="match status" value="1"/>
</dbReference>
<dbReference type="SMART" id="SM00199">
    <property type="entry name" value="SCY"/>
    <property type="match status" value="1"/>
</dbReference>
<dbReference type="SUPFAM" id="SSF54117">
    <property type="entry name" value="Interleukin 8-like chemokines"/>
    <property type="match status" value="1"/>
</dbReference>
<dbReference type="PROSITE" id="PS00472">
    <property type="entry name" value="SMALL_CYTOKINES_CC"/>
    <property type="match status" value="1"/>
</dbReference>
<reference key="1">
    <citation type="journal article" date="2005" name="Science">
        <title>The influence of CCL3L1 gene-containing segmental duplications on HIV-1/AIDS susceptibility.</title>
        <authorList>
            <person name="Gonzalez E."/>
            <person name="Kulkarni H."/>
            <person name="Bolivar H."/>
            <person name="Mangano A."/>
            <person name="Sanchez R."/>
            <person name="Catano G."/>
            <person name="Nibbs R.J."/>
            <person name="Freedman B.I."/>
            <person name="Quinones M.P."/>
            <person name="Bamshad M.J."/>
            <person name="Murthy K.K."/>
            <person name="Rovin B.H."/>
            <person name="Bradley W."/>
            <person name="Clark R.A."/>
            <person name="Anderson S.A."/>
            <person name="O'connell R.J."/>
            <person name="Agan B.K."/>
            <person name="Ahuja S.S."/>
            <person name="Bologna R."/>
            <person name="Sen L."/>
            <person name="Dolan M.J."/>
            <person name="Ahuja S.K."/>
        </authorList>
    </citation>
    <scope>NUCLEOTIDE SEQUENCE [MRNA]</scope>
</reference>
<feature type="signal peptide" evidence="2">
    <location>
        <begin position="1"/>
        <end position="23"/>
    </location>
</feature>
<feature type="chain" id="PRO_0000005159" description="C-C motif chemokine 3">
    <location>
        <begin position="24"/>
        <end position="92"/>
    </location>
</feature>
<feature type="disulfide bond" evidence="2">
    <location>
        <begin position="33"/>
        <end position="57"/>
    </location>
</feature>
<feature type="disulfide bond" evidence="2">
    <location>
        <begin position="34"/>
        <end position="73"/>
    </location>
</feature>
<protein>
    <recommendedName>
        <fullName>C-C motif chemokine 3</fullName>
    </recommendedName>
    <alternativeName>
        <fullName>Macrophage inflammatory protein 1-alpha</fullName>
        <shortName>MIP-1-alpha</shortName>
    </alternativeName>
    <alternativeName>
        <fullName>Small-inducible cytokine A3</fullName>
    </alternativeName>
</protein>
<evidence type="ECO:0000250" key="1"/>
<evidence type="ECO:0000250" key="2">
    <source>
        <dbReference type="UniProtKB" id="P10147"/>
    </source>
</evidence>
<evidence type="ECO:0000305" key="3"/>
<name>CCL3_PANTR</name>
<keyword id="KW-0145">Chemotaxis</keyword>
<keyword id="KW-0202">Cytokine</keyword>
<keyword id="KW-1015">Disulfide bond</keyword>
<keyword id="KW-0395">Inflammatory response</keyword>
<keyword id="KW-1185">Reference proteome</keyword>
<keyword id="KW-0964">Secreted</keyword>
<keyword id="KW-0732">Signal</keyword>
<sequence length="92" mass="10098">MQVSTAALAVLLCTMALCNQFSASLAADTPTACCFSYISRQIPQNFIADYFETSSQCSKPSVIFLTKRGRQVCADPSEEWVQKYVSDLELSA</sequence>
<comment type="function">
    <text evidence="2">Monokine with inflammatory and chemokinetic properties. Binds to CCR1, CCR4 and CCR5. One of the major HIV-suppressive factors produced by CD8+ T-cells. Recombinant MIP-1-alpha induces a dose-dependent inhibition of different strains of HIV-1, HIV-2, and simian immunodeficiency virus (SIV).</text>
</comment>
<comment type="subunit">
    <text evidence="2">Self-associates. Also heterodimer of MIP-1-alpha(4-69) and MIP-1-beta(3-69). Interacts with CCR1.</text>
</comment>
<comment type="subcellular location">
    <subcellularLocation>
        <location evidence="1">Secreted</location>
    </subcellularLocation>
</comment>
<comment type="similarity">
    <text evidence="3">Belongs to the intercrine beta (chemokine CC) family.</text>
</comment>
<accession>Q5I1Z0</accession>
<proteinExistence type="inferred from homology"/>
<organism>
    <name type="scientific">Pan troglodytes</name>
    <name type="common">Chimpanzee</name>
    <dbReference type="NCBI Taxonomy" id="9598"/>
    <lineage>
        <taxon>Eukaryota</taxon>
        <taxon>Metazoa</taxon>
        <taxon>Chordata</taxon>
        <taxon>Craniata</taxon>
        <taxon>Vertebrata</taxon>
        <taxon>Euteleostomi</taxon>
        <taxon>Mammalia</taxon>
        <taxon>Eutheria</taxon>
        <taxon>Euarchontoglires</taxon>
        <taxon>Primates</taxon>
        <taxon>Haplorrhini</taxon>
        <taxon>Catarrhini</taxon>
        <taxon>Hominidae</taxon>
        <taxon>Pan</taxon>
    </lineage>
</organism>
<gene>
    <name type="primary">CCL3</name>
</gene>